<proteinExistence type="inferred from homology"/>
<reference key="1">
    <citation type="journal article" date="2006" name="PLoS Genet.">
        <title>Comparative genomics of emerging human ehrlichiosis agents.</title>
        <authorList>
            <person name="Dunning Hotopp J.C."/>
            <person name="Lin M."/>
            <person name="Madupu R."/>
            <person name="Crabtree J."/>
            <person name="Angiuoli S.V."/>
            <person name="Eisen J.A."/>
            <person name="Seshadri R."/>
            <person name="Ren Q."/>
            <person name="Wu M."/>
            <person name="Utterback T.R."/>
            <person name="Smith S."/>
            <person name="Lewis M."/>
            <person name="Khouri H."/>
            <person name="Zhang C."/>
            <person name="Niu H."/>
            <person name="Lin Q."/>
            <person name="Ohashi N."/>
            <person name="Zhi N."/>
            <person name="Nelson W.C."/>
            <person name="Brinkac L.M."/>
            <person name="Dodson R.J."/>
            <person name="Rosovitz M.J."/>
            <person name="Sundaram J.P."/>
            <person name="Daugherty S.C."/>
            <person name="Davidsen T."/>
            <person name="Durkin A.S."/>
            <person name="Gwinn M.L."/>
            <person name="Haft D.H."/>
            <person name="Selengut J.D."/>
            <person name="Sullivan S.A."/>
            <person name="Zafar N."/>
            <person name="Zhou L."/>
            <person name="Benahmed F."/>
            <person name="Forberger H."/>
            <person name="Halpin R."/>
            <person name="Mulligan S."/>
            <person name="Robinson J."/>
            <person name="White O."/>
            <person name="Rikihisa Y."/>
            <person name="Tettelin H."/>
        </authorList>
    </citation>
    <scope>NUCLEOTIDE SEQUENCE [LARGE SCALE GENOMIC DNA]</scope>
    <source>
        <strain>HZ</strain>
    </source>
</reference>
<name>ENO_ANAPZ</name>
<evidence type="ECO:0000255" key="1">
    <source>
        <dbReference type="HAMAP-Rule" id="MF_00318"/>
    </source>
</evidence>
<accession>Q2GK24</accession>
<gene>
    <name evidence="1" type="primary">eno</name>
    <name type="ordered locus">APH_0695</name>
</gene>
<keyword id="KW-0963">Cytoplasm</keyword>
<keyword id="KW-0324">Glycolysis</keyword>
<keyword id="KW-0456">Lyase</keyword>
<keyword id="KW-0460">Magnesium</keyword>
<keyword id="KW-0479">Metal-binding</keyword>
<keyword id="KW-0964">Secreted</keyword>
<sequence>MLYSRSVAKINGVSARQILDSRGRPTVEAVVSLSDGALGVVSVPSGASVGKNEALELRDKDMNKYGGHGVTKAVENVNSIIAPRLVNTDPFNQKALDDLLIELDGTDNKSRLGANATLAVSVATAKAAAASLKLPLYRYIGGVASREMPVPLVNVINGGLHADNGLDFQEFMIMPIGASTFSDALRMCAEVFLSLKEILKSNKLSTNTGDEGGFAPNLESNDRVFCILLEAIEKAGYKPSIDFALALDVAASTFYDGKIYKFSGSSMSSAEMVSYYEELVKKYPIISIEDGIAEDDLAGWKELTVRLGKKVQLVGDDLFVTNPRLIKDFSERGLANAVLIKPNQIGTLSETIEAIRLASMSNFNSIVSHRSGDTEDPFIAHIAVALNCGQIKTGSMSRSERMAKYNELLRIEEDLCGTAILRSVKIGRH</sequence>
<comment type="function">
    <text evidence="1">Catalyzes the reversible conversion of 2-phosphoglycerate (2-PG) into phosphoenolpyruvate (PEP). It is essential for the degradation of carbohydrates via glycolysis.</text>
</comment>
<comment type="catalytic activity">
    <reaction evidence="1">
        <text>(2R)-2-phosphoglycerate = phosphoenolpyruvate + H2O</text>
        <dbReference type="Rhea" id="RHEA:10164"/>
        <dbReference type="ChEBI" id="CHEBI:15377"/>
        <dbReference type="ChEBI" id="CHEBI:58289"/>
        <dbReference type="ChEBI" id="CHEBI:58702"/>
        <dbReference type="EC" id="4.2.1.11"/>
    </reaction>
</comment>
<comment type="cofactor">
    <cofactor evidence="1">
        <name>Mg(2+)</name>
        <dbReference type="ChEBI" id="CHEBI:18420"/>
    </cofactor>
    <text evidence="1">Binds a second Mg(2+) ion via substrate during catalysis.</text>
</comment>
<comment type="pathway">
    <text evidence="1">Carbohydrate degradation; glycolysis; pyruvate from D-glyceraldehyde 3-phosphate: step 4/5.</text>
</comment>
<comment type="subcellular location">
    <subcellularLocation>
        <location evidence="1">Cytoplasm</location>
    </subcellularLocation>
    <subcellularLocation>
        <location evidence="1">Secreted</location>
    </subcellularLocation>
    <subcellularLocation>
        <location evidence="1">Cell surface</location>
    </subcellularLocation>
    <text evidence="1">Fractions of enolase are present in both the cytoplasm and on the cell surface.</text>
</comment>
<comment type="similarity">
    <text evidence="1">Belongs to the enolase family.</text>
</comment>
<organism>
    <name type="scientific">Anaplasma phagocytophilum (strain HZ)</name>
    <dbReference type="NCBI Taxonomy" id="212042"/>
    <lineage>
        <taxon>Bacteria</taxon>
        <taxon>Pseudomonadati</taxon>
        <taxon>Pseudomonadota</taxon>
        <taxon>Alphaproteobacteria</taxon>
        <taxon>Rickettsiales</taxon>
        <taxon>Anaplasmataceae</taxon>
        <taxon>Anaplasma</taxon>
        <taxon>phagocytophilum group</taxon>
    </lineage>
</organism>
<dbReference type="EC" id="4.2.1.11" evidence="1"/>
<dbReference type="EMBL" id="CP000235">
    <property type="protein sequence ID" value="ABD44357.1"/>
    <property type="molecule type" value="Genomic_DNA"/>
</dbReference>
<dbReference type="RefSeq" id="WP_011450798.1">
    <property type="nucleotide sequence ID" value="NC_007797.1"/>
</dbReference>
<dbReference type="SMR" id="Q2GK24"/>
<dbReference type="STRING" id="212042.APH_0695"/>
<dbReference type="PaxDb" id="212042-APH_0695"/>
<dbReference type="EnsemblBacteria" id="ABD44357">
    <property type="protein sequence ID" value="ABD44357"/>
    <property type="gene ID" value="APH_0695"/>
</dbReference>
<dbReference type="GeneID" id="92748241"/>
<dbReference type="KEGG" id="aph:APH_0695"/>
<dbReference type="eggNOG" id="COG0148">
    <property type="taxonomic scope" value="Bacteria"/>
</dbReference>
<dbReference type="HOGENOM" id="CLU_031223_2_1_5"/>
<dbReference type="BRENDA" id="4.2.1.11">
    <property type="organism ID" value="10009"/>
</dbReference>
<dbReference type="UniPathway" id="UPA00109">
    <property type="reaction ID" value="UER00187"/>
</dbReference>
<dbReference type="Proteomes" id="UP000001943">
    <property type="component" value="Chromosome"/>
</dbReference>
<dbReference type="GO" id="GO:0009986">
    <property type="term" value="C:cell surface"/>
    <property type="evidence" value="ECO:0007669"/>
    <property type="project" value="UniProtKB-SubCell"/>
</dbReference>
<dbReference type="GO" id="GO:0005576">
    <property type="term" value="C:extracellular region"/>
    <property type="evidence" value="ECO:0007669"/>
    <property type="project" value="UniProtKB-SubCell"/>
</dbReference>
<dbReference type="GO" id="GO:0000015">
    <property type="term" value="C:phosphopyruvate hydratase complex"/>
    <property type="evidence" value="ECO:0007669"/>
    <property type="project" value="InterPro"/>
</dbReference>
<dbReference type="GO" id="GO:0000287">
    <property type="term" value="F:magnesium ion binding"/>
    <property type="evidence" value="ECO:0007669"/>
    <property type="project" value="UniProtKB-UniRule"/>
</dbReference>
<dbReference type="GO" id="GO:0004634">
    <property type="term" value="F:phosphopyruvate hydratase activity"/>
    <property type="evidence" value="ECO:0007669"/>
    <property type="project" value="UniProtKB-UniRule"/>
</dbReference>
<dbReference type="GO" id="GO:0006096">
    <property type="term" value="P:glycolytic process"/>
    <property type="evidence" value="ECO:0007669"/>
    <property type="project" value="UniProtKB-UniRule"/>
</dbReference>
<dbReference type="CDD" id="cd03313">
    <property type="entry name" value="enolase"/>
    <property type="match status" value="1"/>
</dbReference>
<dbReference type="Gene3D" id="3.20.20.120">
    <property type="entry name" value="Enolase-like C-terminal domain"/>
    <property type="match status" value="1"/>
</dbReference>
<dbReference type="Gene3D" id="3.30.390.10">
    <property type="entry name" value="Enolase-like, N-terminal domain"/>
    <property type="match status" value="1"/>
</dbReference>
<dbReference type="HAMAP" id="MF_00318">
    <property type="entry name" value="Enolase"/>
    <property type="match status" value="1"/>
</dbReference>
<dbReference type="InterPro" id="IPR000941">
    <property type="entry name" value="Enolase"/>
</dbReference>
<dbReference type="InterPro" id="IPR036849">
    <property type="entry name" value="Enolase-like_C_sf"/>
</dbReference>
<dbReference type="InterPro" id="IPR029017">
    <property type="entry name" value="Enolase-like_N"/>
</dbReference>
<dbReference type="InterPro" id="IPR020810">
    <property type="entry name" value="Enolase_C"/>
</dbReference>
<dbReference type="InterPro" id="IPR020809">
    <property type="entry name" value="Enolase_CS"/>
</dbReference>
<dbReference type="InterPro" id="IPR020811">
    <property type="entry name" value="Enolase_N"/>
</dbReference>
<dbReference type="NCBIfam" id="TIGR01060">
    <property type="entry name" value="eno"/>
    <property type="match status" value="1"/>
</dbReference>
<dbReference type="PANTHER" id="PTHR11902">
    <property type="entry name" value="ENOLASE"/>
    <property type="match status" value="1"/>
</dbReference>
<dbReference type="PANTHER" id="PTHR11902:SF1">
    <property type="entry name" value="ENOLASE"/>
    <property type="match status" value="1"/>
</dbReference>
<dbReference type="Pfam" id="PF00113">
    <property type="entry name" value="Enolase_C"/>
    <property type="match status" value="1"/>
</dbReference>
<dbReference type="Pfam" id="PF03952">
    <property type="entry name" value="Enolase_N"/>
    <property type="match status" value="1"/>
</dbReference>
<dbReference type="PIRSF" id="PIRSF001400">
    <property type="entry name" value="Enolase"/>
    <property type="match status" value="1"/>
</dbReference>
<dbReference type="PRINTS" id="PR00148">
    <property type="entry name" value="ENOLASE"/>
</dbReference>
<dbReference type="SFLD" id="SFLDF00002">
    <property type="entry name" value="enolase"/>
    <property type="match status" value="1"/>
</dbReference>
<dbReference type="SFLD" id="SFLDG00178">
    <property type="entry name" value="enolase"/>
    <property type="match status" value="1"/>
</dbReference>
<dbReference type="SMART" id="SM01192">
    <property type="entry name" value="Enolase_C"/>
    <property type="match status" value="1"/>
</dbReference>
<dbReference type="SMART" id="SM01193">
    <property type="entry name" value="Enolase_N"/>
    <property type="match status" value="1"/>
</dbReference>
<dbReference type="SUPFAM" id="SSF51604">
    <property type="entry name" value="Enolase C-terminal domain-like"/>
    <property type="match status" value="1"/>
</dbReference>
<dbReference type="SUPFAM" id="SSF54826">
    <property type="entry name" value="Enolase N-terminal domain-like"/>
    <property type="match status" value="1"/>
</dbReference>
<dbReference type="PROSITE" id="PS00164">
    <property type="entry name" value="ENOLASE"/>
    <property type="match status" value="1"/>
</dbReference>
<feature type="chain" id="PRO_0000266997" description="Enolase">
    <location>
        <begin position="1"/>
        <end position="429"/>
    </location>
</feature>
<feature type="active site" description="Proton donor" evidence="1">
    <location>
        <position position="211"/>
    </location>
</feature>
<feature type="active site" description="Proton acceptor" evidence="1">
    <location>
        <position position="341"/>
    </location>
</feature>
<feature type="binding site" evidence="1">
    <location>
        <position position="169"/>
    </location>
    <ligand>
        <name>(2R)-2-phosphoglycerate</name>
        <dbReference type="ChEBI" id="CHEBI:58289"/>
    </ligand>
</feature>
<feature type="binding site" evidence="1">
    <location>
        <position position="248"/>
    </location>
    <ligand>
        <name>Mg(2+)</name>
        <dbReference type="ChEBI" id="CHEBI:18420"/>
    </ligand>
</feature>
<feature type="binding site" evidence="1">
    <location>
        <position position="289"/>
    </location>
    <ligand>
        <name>Mg(2+)</name>
        <dbReference type="ChEBI" id="CHEBI:18420"/>
    </ligand>
</feature>
<feature type="binding site" evidence="1">
    <location>
        <position position="316"/>
    </location>
    <ligand>
        <name>Mg(2+)</name>
        <dbReference type="ChEBI" id="CHEBI:18420"/>
    </ligand>
</feature>
<feature type="binding site" evidence="1">
    <location>
        <position position="341"/>
    </location>
    <ligand>
        <name>(2R)-2-phosphoglycerate</name>
        <dbReference type="ChEBI" id="CHEBI:58289"/>
    </ligand>
</feature>
<feature type="binding site" evidence="1">
    <location>
        <position position="370"/>
    </location>
    <ligand>
        <name>(2R)-2-phosphoglycerate</name>
        <dbReference type="ChEBI" id="CHEBI:58289"/>
    </ligand>
</feature>
<feature type="binding site" evidence="1">
    <location>
        <position position="371"/>
    </location>
    <ligand>
        <name>(2R)-2-phosphoglycerate</name>
        <dbReference type="ChEBI" id="CHEBI:58289"/>
    </ligand>
</feature>
<feature type="binding site" evidence="1">
    <location>
        <position position="392"/>
    </location>
    <ligand>
        <name>(2R)-2-phosphoglycerate</name>
        <dbReference type="ChEBI" id="CHEBI:58289"/>
    </ligand>
</feature>
<protein>
    <recommendedName>
        <fullName evidence="1">Enolase</fullName>
        <ecNumber evidence="1">4.2.1.11</ecNumber>
    </recommendedName>
    <alternativeName>
        <fullName evidence="1">2-phospho-D-glycerate hydro-lyase</fullName>
    </alternativeName>
    <alternativeName>
        <fullName evidence="1">2-phosphoglycerate dehydratase</fullName>
    </alternativeName>
</protein>